<accession>Q7A1Q9</accession>
<name>TRMHL_STAAW</name>
<keyword id="KW-0489">Methyltransferase</keyword>
<keyword id="KW-0808">Transferase</keyword>
<sequence length="248" mass="27181">MEDTVIVGRHAVREAIITGHPINKILIQEGIKKQQINEILKNAKDQKIIVQTVPKSKLDFLANAPHQGVAALIAPYEYADFDQFLKQQKEKEGLSTVLILDGLEDPHNLGSILRTADATGVDGVIIPKRRSVTLTQTVAKASTGAIEHVPVIRVTNLAKTIDELKDNGFWVAGTEANNATDYRNLEADMSLAIVIGSEGQGMSRLVSDKCDFYIKIPMVGHVNSLNASVAASLMMYEVFRKRHDVGEI</sequence>
<evidence type="ECO:0000250" key="1"/>
<evidence type="ECO:0000305" key="2"/>
<organism>
    <name type="scientific">Staphylococcus aureus (strain MW2)</name>
    <dbReference type="NCBI Taxonomy" id="196620"/>
    <lineage>
        <taxon>Bacteria</taxon>
        <taxon>Bacillati</taxon>
        <taxon>Bacillota</taxon>
        <taxon>Bacilli</taxon>
        <taxon>Bacillales</taxon>
        <taxon>Staphylococcaceae</taxon>
        <taxon>Staphylococcus</taxon>
    </lineage>
</organism>
<reference key="1">
    <citation type="journal article" date="2002" name="Lancet">
        <title>Genome and virulence determinants of high virulence community-acquired MRSA.</title>
        <authorList>
            <person name="Baba T."/>
            <person name="Takeuchi F."/>
            <person name="Kuroda M."/>
            <person name="Yuzawa H."/>
            <person name="Aoki K."/>
            <person name="Oguchi A."/>
            <person name="Nagai Y."/>
            <person name="Iwama N."/>
            <person name="Asano K."/>
            <person name="Naimi T."/>
            <person name="Kuroda H."/>
            <person name="Cui L."/>
            <person name="Yamamoto K."/>
            <person name="Hiramatsu K."/>
        </authorList>
    </citation>
    <scope>NUCLEOTIDE SEQUENCE [LARGE SCALE GENOMIC DNA]</scope>
    <source>
        <strain>MW2</strain>
    </source>
</reference>
<feature type="chain" id="PRO_0000224829" description="Putative TrmH family tRNA/rRNA methyltransferase">
    <location>
        <begin position="1"/>
        <end position="248"/>
    </location>
</feature>
<feature type="binding site" evidence="1">
    <location>
        <position position="196"/>
    </location>
    <ligand>
        <name>S-adenosyl-L-methionine</name>
        <dbReference type="ChEBI" id="CHEBI:59789"/>
    </ligand>
</feature>
<feature type="binding site" evidence="1">
    <location>
        <position position="216"/>
    </location>
    <ligand>
        <name>S-adenosyl-L-methionine</name>
        <dbReference type="ChEBI" id="CHEBI:59789"/>
    </ligand>
</feature>
<feature type="binding site" evidence="1">
    <location>
        <position position="225"/>
    </location>
    <ligand>
        <name>S-adenosyl-L-methionine</name>
        <dbReference type="ChEBI" id="CHEBI:59789"/>
    </ligand>
</feature>
<gene>
    <name type="ordered locus">MW0487</name>
</gene>
<dbReference type="EC" id="2.1.1.-"/>
<dbReference type="EMBL" id="BA000033">
    <property type="protein sequence ID" value="BAB94352.1"/>
    <property type="molecule type" value="Genomic_DNA"/>
</dbReference>
<dbReference type="SMR" id="Q7A1Q9"/>
<dbReference type="KEGG" id="sam:MW0487"/>
<dbReference type="HOGENOM" id="CLU_021322_0_1_9"/>
<dbReference type="GO" id="GO:0005829">
    <property type="term" value="C:cytosol"/>
    <property type="evidence" value="ECO:0007669"/>
    <property type="project" value="TreeGrafter"/>
</dbReference>
<dbReference type="GO" id="GO:0003723">
    <property type="term" value="F:RNA binding"/>
    <property type="evidence" value="ECO:0007669"/>
    <property type="project" value="InterPro"/>
</dbReference>
<dbReference type="GO" id="GO:0008173">
    <property type="term" value="F:RNA methyltransferase activity"/>
    <property type="evidence" value="ECO:0007669"/>
    <property type="project" value="InterPro"/>
</dbReference>
<dbReference type="GO" id="GO:0032259">
    <property type="term" value="P:methylation"/>
    <property type="evidence" value="ECO:0007669"/>
    <property type="project" value="UniProtKB-KW"/>
</dbReference>
<dbReference type="GO" id="GO:0006396">
    <property type="term" value="P:RNA processing"/>
    <property type="evidence" value="ECO:0007669"/>
    <property type="project" value="InterPro"/>
</dbReference>
<dbReference type="CDD" id="cd18103">
    <property type="entry name" value="SpoU-like_RlmB"/>
    <property type="match status" value="1"/>
</dbReference>
<dbReference type="FunFam" id="3.40.1280.10:FF:000008">
    <property type="entry name" value="Group 3 RNA methyltransferase TrmH"/>
    <property type="match status" value="1"/>
</dbReference>
<dbReference type="Gene3D" id="3.30.1330.30">
    <property type="match status" value="1"/>
</dbReference>
<dbReference type="Gene3D" id="3.40.1280.10">
    <property type="match status" value="1"/>
</dbReference>
<dbReference type="InterPro" id="IPR029028">
    <property type="entry name" value="Alpha/beta_knot_MTases"/>
</dbReference>
<dbReference type="InterPro" id="IPR029064">
    <property type="entry name" value="Ribosomal_eL30-like_sf"/>
</dbReference>
<dbReference type="InterPro" id="IPR004441">
    <property type="entry name" value="rRNA_MeTrfase_TrmH"/>
</dbReference>
<dbReference type="InterPro" id="IPR001537">
    <property type="entry name" value="SpoU_MeTrfase"/>
</dbReference>
<dbReference type="InterPro" id="IPR013123">
    <property type="entry name" value="SpoU_subst-bd"/>
</dbReference>
<dbReference type="InterPro" id="IPR029026">
    <property type="entry name" value="tRNA_m1G_MTases_N"/>
</dbReference>
<dbReference type="NCBIfam" id="TIGR00186">
    <property type="entry name" value="rRNA_methyl_3"/>
    <property type="match status" value="1"/>
</dbReference>
<dbReference type="PANTHER" id="PTHR46429">
    <property type="entry name" value="23S RRNA (GUANOSINE-2'-O-)-METHYLTRANSFERASE RLMB"/>
    <property type="match status" value="1"/>
</dbReference>
<dbReference type="PANTHER" id="PTHR46429:SF1">
    <property type="entry name" value="23S RRNA (GUANOSINE-2'-O-)-METHYLTRANSFERASE RLMB"/>
    <property type="match status" value="1"/>
</dbReference>
<dbReference type="Pfam" id="PF00588">
    <property type="entry name" value="SpoU_methylase"/>
    <property type="match status" value="1"/>
</dbReference>
<dbReference type="Pfam" id="PF08032">
    <property type="entry name" value="SpoU_sub_bind"/>
    <property type="match status" value="1"/>
</dbReference>
<dbReference type="SMART" id="SM00967">
    <property type="entry name" value="SpoU_sub_bind"/>
    <property type="match status" value="1"/>
</dbReference>
<dbReference type="SUPFAM" id="SSF75217">
    <property type="entry name" value="alpha/beta knot"/>
    <property type="match status" value="1"/>
</dbReference>
<dbReference type="SUPFAM" id="SSF55315">
    <property type="entry name" value="L30e-like"/>
    <property type="match status" value="1"/>
</dbReference>
<protein>
    <recommendedName>
        <fullName>Putative TrmH family tRNA/rRNA methyltransferase</fullName>
        <ecNumber>2.1.1.-</ecNumber>
    </recommendedName>
</protein>
<proteinExistence type="inferred from homology"/>
<comment type="similarity">
    <text evidence="2">Belongs to the class IV-like SAM-binding methyltransferase superfamily. RNA methyltransferase TrmH family.</text>
</comment>